<comment type="function">
    <text evidence="1">Catalyzes the reversible phosphorylation of UMP to UDP.</text>
</comment>
<comment type="catalytic activity">
    <reaction evidence="1">
        <text>UMP + ATP = UDP + ADP</text>
        <dbReference type="Rhea" id="RHEA:24400"/>
        <dbReference type="ChEBI" id="CHEBI:30616"/>
        <dbReference type="ChEBI" id="CHEBI:57865"/>
        <dbReference type="ChEBI" id="CHEBI:58223"/>
        <dbReference type="ChEBI" id="CHEBI:456216"/>
        <dbReference type="EC" id="2.7.4.22"/>
    </reaction>
</comment>
<comment type="activity regulation">
    <text evidence="1">Allosterically activated by GTP. Inhibited by UTP.</text>
</comment>
<comment type="pathway">
    <text evidence="1">Pyrimidine metabolism; CTP biosynthesis via de novo pathway; UDP from UMP (UMPK route): step 1/1.</text>
</comment>
<comment type="subunit">
    <text evidence="1">Homohexamer.</text>
</comment>
<comment type="subcellular location">
    <subcellularLocation>
        <location evidence="1">Cytoplasm</location>
    </subcellularLocation>
</comment>
<comment type="similarity">
    <text evidence="1">Belongs to the UMP kinase family.</text>
</comment>
<reference key="1">
    <citation type="journal article" date="2006" name="Proc. Natl. Acad. Sci. U.S.A.">
        <title>Comparative genomics of the lactic acid bacteria.</title>
        <authorList>
            <person name="Makarova K.S."/>
            <person name="Slesarev A."/>
            <person name="Wolf Y.I."/>
            <person name="Sorokin A."/>
            <person name="Mirkin B."/>
            <person name="Koonin E.V."/>
            <person name="Pavlov A."/>
            <person name="Pavlova N."/>
            <person name="Karamychev V."/>
            <person name="Polouchine N."/>
            <person name="Shakhova V."/>
            <person name="Grigoriev I."/>
            <person name="Lou Y."/>
            <person name="Rohksar D."/>
            <person name="Lucas S."/>
            <person name="Huang K."/>
            <person name="Goodstein D.M."/>
            <person name="Hawkins T."/>
            <person name="Plengvidhya V."/>
            <person name="Welker D."/>
            <person name="Hughes J."/>
            <person name="Goh Y."/>
            <person name="Benson A."/>
            <person name="Baldwin K."/>
            <person name="Lee J.-H."/>
            <person name="Diaz-Muniz I."/>
            <person name="Dosti B."/>
            <person name="Smeianov V."/>
            <person name="Wechter W."/>
            <person name="Barabote R."/>
            <person name="Lorca G."/>
            <person name="Altermann E."/>
            <person name="Barrangou R."/>
            <person name="Ganesan B."/>
            <person name="Xie Y."/>
            <person name="Rawsthorne H."/>
            <person name="Tamir D."/>
            <person name="Parker C."/>
            <person name="Breidt F."/>
            <person name="Broadbent J.R."/>
            <person name="Hutkins R."/>
            <person name="O'Sullivan D."/>
            <person name="Steele J."/>
            <person name="Unlu G."/>
            <person name="Saier M.H. Jr."/>
            <person name="Klaenhammer T."/>
            <person name="Richardson P."/>
            <person name="Kozyavkin S."/>
            <person name="Weimer B.C."/>
            <person name="Mills D.A."/>
        </authorList>
    </citation>
    <scope>NUCLEOTIDE SEQUENCE [LARGE SCALE GENOMIC DNA]</scope>
    <source>
        <strain>ATCC 367 / BCRC 12310 / CIP 105137 / JCM 1170 / LMG 11437 / NCIMB 947 / NCTC 947</strain>
    </source>
</reference>
<keyword id="KW-0021">Allosteric enzyme</keyword>
<keyword id="KW-0067">ATP-binding</keyword>
<keyword id="KW-0963">Cytoplasm</keyword>
<keyword id="KW-0418">Kinase</keyword>
<keyword id="KW-0547">Nucleotide-binding</keyword>
<keyword id="KW-0665">Pyrimidine biosynthesis</keyword>
<keyword id="KW-1185">Reference proteome</keyword>
<keyword id="KW-0808">Transferase</keyword>
<protein>
    <recommendedName>
        <fullName evidence="1">Uridylate kinase</fullName>
        <shortName evidence="1">UK</shortName>
        <ecNumber evidence="1">2.7.4.22</ecNumber>
    </recommendedName>
    <alternativeName>
        <fullName evidence="1">Uridine monophosphate kinase</fullName>
        <shortName evidence="1">UMP kinase</shortName>
        <shortName evidence="1">UMPK</shortName>
    </alternativeName>
</protein>
<evidence type="ECO:0000255" key="1">
    <source>
        <dbReference type="HAMAP-Rule" id="MF_01220"/>
    </source>
</evidence>
<sequence>MADVKYKRIMLKLSGEALAGDKGFGINPPVIKTVAEEVKDVYNLGIQIAIVVGGGNMWRGEAGAQMGMERAQADYIGMLATIMNALALQDNLESIGVPTRVQTSIEMRQIAEPYIRRKAIRHLEKERVVIFAGGTGSPYFSTDTTAALRAAEINADAILMAKNGVDGIYSADPKKDPAAVKFDQLTQLDIINKGLNVMDTTASSLSMDNDIPFVVFNLNESGNIRKVVEGENIGTTVRGK</sequence>
<name>PYRH_LEVBA</name>
<dbReference type="EC" id="2.7.4.22" evidence="1"/>
<dbReference type="EMBL" id="CP000416">
    <property type="protein sequence ID" value="ABJ64449.1"/>
    <property type="molecule type" value="Genomic_DNA"/>
</dbReference>
<dbReference type="RefSeq" id="WP_011668022.1">
    <property type="nucleotide sequence ID" value="NC_008497.1"/>
</dbReference>
<dbReference type="SMR" id="Q03QS3"/>
<dbReference type="STRING" id="387344.LVIS_1348"/>
<dbReference type="GeneID" id="56993118"/>
<dbReference type="KEGG" id="lbr:LVIS_1348"/>
<dbReference type="eggNOG" id="COG0528">
    <property type="taxonomic scope" value="Bacteria"/>
</dbReference>
<dbReference type="HOGENOM" id="CLU_033861_0_0_9"/>
<dbReference type="UniPathway" id="UPA00159">
    <property type="reaction ID" value="UER00275"/>
</dbReference>
<dbReference type="Proteomes" id="UP000001652">
    <property type="component" value="Chromosome"/>
</dbReference>
<dbReference type="GO" id="GO:0005737">
    <property type="term" value="C:cytoplasm"/>
    <property type="evidence" value="ECO:0007669"/>
    <property type="project" value="UniProtKB-SubCell"/>
</dbReference>
<dbReference type="GO" id="GO:0005524">
    <property type="term" value="F:ATP binding"/>
    <property type="evidence" value="ECO:0007669"/>
    <property type="project" value="UniProtKB-KW"/>
</dbReference>
<dbReference type="GO" id="GO:0033862">
    <property type="term" value="F:UMP kinase activity"/>
    <property type="evidence" value="ECO:0007669"/>
    <property type="project" value="UniProtKB-EC"/>
</dbReference>
<dbReference type="GO" id="GO:0044210">
    <property type="term" value="P:'de novo' CTP biosynthetic process"/>
    <property type="evidence" value="ECO:0007669"/>
    <property type="project" value="UniProtKB-UniRule"/>
</dbReference>
<dbReference type="GO" id="GO:0006225">
    <property type="term" value="P:UDP biosynthetic process"/>
    <property type="evidence" value="ECO:0007669"/>
    <property type="project" value="TreeGrafter"/>
</dbReference>
<dbReference type="CDD" id="cd04254">
    <property type="entry name" value="AAK_UMPK-PyrH-Ec"/>
    <property type="match status" value="1"/>
</dbReference>
<dbReference type="FunFam" id="3.40.1160.10:FF:000001">
    <property type="entry name" value="Uridylate kinase"/>
    <property type="match status" value="1"/>
</dbReference>
<dbReference type="Gene3D" id="3.40.1160.10">
    <property type="entry name" value="Acetylglutamate kinase-like"/>
    <property type="match status" value="1"/>
</dbReference>
<dbReference type="HAMAP" id="MF_01220_B">
    <property type="entry name" value="PyrH_B"/>
    <property type="match status" value="1"/>
</dbReference>
<dbReference type="InterPro" id="IPR036393">
    <property type="entry name" value="AceGlu_kinase-like_sf"/>
</dbReference>
<dbReference type="InterPro" id="IPR001048">
    <property type="entry name" value="Asp/Glu/Uridylate_kinase"/>
</dbReference>
<dbReference type="InterPro" id="IPR011817">
    <property type="entry name" value="Uridylate_kinase"/>
</dbReference>
<dbReference type="InterPro" id="IPR015963">
    <property type="entry name" value="Uridylate_kinase_bac"/>
</dbReference>
<dbReference type="NCBIfam" id="TIGR02075">
    <property type="entry name" value="pyrH_bact"/>
    <property type="match status" value="1"/>
</dbReference>
<dbReference type="PANTHER" id="PTHR42833">
    <property type="entry name" value="URIDYLATE KINASE"/>
    <property type="match status" value="1"/>
</dbReference>
<dbReference type="PANTHER" id="PTHR42833:SF4">
    <property type="entry name" value="URIDYLATE KINASE PUMPKIN, CHLOROPLASTIC"/>
    <property type="match status" value="1"/>
</dbReference>
<dbReference type="Pfam" id="PF00696">
    <property type="entry name" value="AA_kinase"/>
    <property type="match status" value="1"/>
</dbReference>
<dbReference type="PIRSF" id="PIRSF005650">
    <property type="entry name" value="Uridylate_kin"/>
    <property type="match status" value="1"/>
</dbReference>
<dbReference type="SUPFAM" id="SSF53633">
    <property type="entry name" value="Carbamate kinase-like"/>
    <property type="match status" value="1"/>
</dbReference>
<organism>
    <name type="scientific">Levilactobacillus brevis (strain ATCC 367 / BCRC 12310 / CIP 105137 / JCM 1170 / LMG 11437 / NCIMB 947 / NCTC 947)</name>
    <name type="common">Lactobacillus brevis</name>
    <dbReference type="NCBI Taxonomy" id="387344"/>
    <lineage>
        <taxon>Bacteria</taxon>
        <taxon>Bacillati</taxon>
        <taxon>Bacillota</taxon>
        <taxon>Bacilli</taxon>
        <taxon>Lactobacillales</taxon>
        <taxon>Lactobacillaceae</taxon>
        <taxon>Levilactobacillus</taxon>
    </lineage>
</organism>
<gene>
    <name evidence="1" type="primary">pyrH</name>
    <name type="ordered locus">LVIS_1348</name>
</gene>
<feature type="chain" id="PRO_1000053938" description="Uridylate kinase">
    <location>
        <begin position="1"/>
        <end position="240"/>
    </location>
</feature>
<feature type="region of interest" description="Involved in allosteric activation by GTP" evidence="1">
    <location>
        <begin position="20"/>
        <end position="25"/>
    </location>
</feature>
<feature type="binding site" evidence="1">
    <location>
        <begin position="12"/>
        <end position="15"/>
    </location>
    <ligand>
        <name>ATP</name>
        <dbReference type="ChEBI" id="CHEBI:30616"/>
    </ligand>
</feature>
<feature type="binding site" evidence="1">
    <location>
        <position position="54"/>
    </location>
    <ligand>
        <name>UMP</name>
        <dbReference type="ChEBI" id="CHEBI:57865"/>
    </ligand>
</feature>
<feature type="binding site" evidence="1">
    <location>
        <position position="55"/>
    </location>
    <ligand>
        <name>ATP</name>
        <dbReference type="ChEBI" id="CHEBI:30616"/>
    </ligand>
</feature>
<feature type="binding site" evidence="1">
    <location>
        <position position="59"/>
    </location>
    <ligand>
        <name>ATP</name>
        <dbReference type="ChEBI" id="CHEBI:30616"/>
    </ligand>
</feature>
<feature type="binding site" evidence="1">
    <location>
        <position position="74"/>
    </location>
    <ligand>
        <name>UMP</name>
        <dbReference type="ChEBI" id="CHEBI:57865"/>
    </ligand>
</feature>
<feature type="binding site" evidence="1">
    <location>
        <begin position="135"/>
        <end position="142"/>
    </location>
    <ligand>
        <name>UMP</name>
        <dbReference type="ChEBI" id="CHEBI:57865"/>
    </ligand>
</feature>
<feature type="binding site" evidence="1">
    <location>
        <position position="163"/>
    </location>
    <ligand>
        <name>ATP</name>
        <dbReference type="ChEBI" id="CHEBI:30616"/>
    </ligand>
</feature>
<feature type="binding site" evidence="1">
    <location>
        <position position="169"/>
    </location>
    <ligand>
        <name>ATP</name>
        <dbReference type="ChEBI" id="CHEBI:30616"/>
    </ligand>
</feature>
<feature type="binding site" evidence="1">
    <location>
        <position position="172"/>
    </location>
    <ligand>
        <name>ATP</name>
        <dbReference type="ChEBI" id="CHEBI:30616"/>
    </ligand>
</feature>
<accession>Q03QS3</accession>
<proteinExistence type="inferred from homology"/>